<comment type="function">
    <text evidence="1">Allows the formation of correctly charged Gln-tRNA(Gln) through the transamidation of misacylated Glu-tRNA(Gln) in organisms which lack glutaminyl-tRNA synthetase. The reaction takes place in the presence of glutamine and ATP through an activated gamma-phospho-Glu-tRNA(Gln).</text>
</comment>
<comment type="catalytic activity">
    <reaction evidence="1">
        <text>L-glutamyl-tRNA(Gln) + L-glutamine + ATP + H2O = L-glutaminyl-tRNA(Gln) + L-glutamate + ADP + phosphate + H(+)</text>
        <dbReference type="Rhea" id="RHEA:17521"/>
        <dbReference type="Rhea" id="RHEA-COMP:9681"/>
        <dbReference type="Rhea" id="RHEA-COMP:9684"/>
        <dbReference type="ChEBI" id="CHEBI:15377"/>
        <dbReference type="ChEBI" id="CHEBI:15378"/>
        <dbReference type="ChEBI" id="CHEBI:29985"/>
        <dbReference type="ChEBI" id="CHEBI:30616"/>
        <dbReference type="ChEBI" id="CHEBI:43474"/>
        <dbReference type="ChEBI" id="CHEBI:58359"/>
        <dbReference type="ChEBI" id="CHEBI:78520"/>
        <dbReference type="ChEBI" id="CHEBI:78521"/>
        <dbReference type="ChEBI" id="CHEBI:456216"/>
        <dbReference type="EC" id="6.3.5.7"/>
    </reaction>
</comment>
<comment type="subunit">
    <text evidence="1">Heterotrimer of A, B and C subunits.</text>
</comment>
<comment type="similarity">
    <text evidence="1">Belongs to the amidase family. GatA subfamily.</text>
</comment>
<feature type="chain" id="PRO_1000122463" description="Glutamyl-tRNA(Gln) amidotransferase subunit A">
    <location>
        <begin position="1"/>
        <end position="485"/>
    </location>
</feature>
<feature type="active site" description="Charge relay system" evidence="1">
    <location>
        <position position="78"/>
    </location>
</feature>
<feature type="active site" description="Charge relay system" evidence="1">
    <location>
        <position position="153"/>
    </location>
</feature>
<feature type="active site" description="Acyl-ester intermediate" evidence="1">
    <location>
        <position position="177"/>
    </location>
</feature>
<sequence length="485" mass="52295">MSLFDHSVSELHKKLNNKEISVTDLVEESYKRIADVEDNVKAFLTLDEENARAKAKELDAKIGAEDNGLLFGMPIGVKDNIVTNGLRTTCASKILANFDPIYDATVVQKLKAADTITIGKLNMDEFAMGSSNENSGFYATKNPWNLDYVPGGSSGGSAAAVAAGEVLFSLGSDTGGSIRQPAAYCGVVGLKPTYGRVSRYGLVAFASSLDQIGPITRTVEDNAYLLQAISGLDRMDATSANVEVGNYLAGLTGDVKGLRIAVPKEYLGEGVGEEARESVLAALKVLEGMGATWEEVSLPHSKYALATYYLLSSSEASANLSRFDGVRYGVRSDNVNNLMDLYKNTRSEGFGDEVKRRIMLGTFALSSGYYDAYYKKAQQVRTLIKNDFENVFANYDVIIGPTTPTPAFKVGEKVDDPMTMYANDILTIPVNLAGVPAISVPCGFGANNMPLGLQIIGKHFDEATIYRVAHAFEQATDHHTKKASL</sequence>
<reference key="1">
    <citation type="submission" date="2009-04" db="EMBL/GenBank/DDBJ databases">
        <title>Genome sequence of Bacillus anthracis A0248.</title>
        <authorList>
            <person name="Dodson R.J."/>
            <person name="Munk A.C."/>
            <person name="Bruce D."/>
            <person name="Detter C."/>
            <person name="Tapia R."/>
            <person name="Sutton G."/>
            <person name="Sims D."/>
            <person name="Brettin T."/>
        </authorList>
    </citation>
    <scope>NUCLEOTIDE SEQUENCE [LARGE SCALE GENOMIC DNA]</scope>
    <source>
        <strain>A0248</strain>
    </source>
</reference>
<accession>C3PBQ4</accession>
<proteinExistence type="inferred from homology"/>
<organism>
    <name type="scientific">Bacillus anthracis (strain A0248)</name>
    <dbReference type="NCBI Taxonomy" id="592021"/>
    <lineage>
        <taxon>Bacteria</taxon>
        <taxon>Bacillati</taxon>
        <taxon>Bacillota</taxon>
        <taxon>Bacilli</taxon>
        <taxon>Bacillales</taxon>
        <taxon>Bacillaceae</taxon>
        <taxon>Bacillus</taxon>
        <taxon>Bacillus cereus group</taxon>
    </lineage>
</organism>
<keyword id="KW-0067">ATP-binding</keyword>
<keyword id="KW-0436">Ligase</keyword>
<keyword id="KW-0547">Nucleotide-binding</keyword>
<keyword id="KW-0648">Protein biosynthesis</keyword>
<protein>
    <recommendedName>
        <fullName evidence="1">Glutamyl-tRNA(Gln) amidotransferase subunit A</fullName>
        <shortName evidence="1">Glu-ADT subunit A</shortName>
        <ecNumber evidence="1">6.3.5.7</ecNumber>
    </recommendedName>
</protein>
<evidence type="ECO:0000255" key="1">
    <source>
        <dbReference type="HAMAP-Rule" id="MF_00120"/>
    </source>
</evidence>
<dbReference type="EC" id="6.3.5.7" evidence="1"/>
<dbReference type="EMBL" id="CP001598">
    <property type="protein sequence ID" value="ACQ50459.1"/>
    <property type="molecule type" value="Genomic_DNA"/>
</dbReference>
<dbReference type="RefSeq" id="WP_000051435.1">
    <property type="nucleotide sequence ID" value="NC_012659.1"/>
</dbReference>
<dbReference type="SMR" id="C3PBQ4"/>
<dbReference type="GeneID" id="45020377"/>
<dbReference type="KEGG" id="bai:BAA_0377"/>
<dbReference type="HOGENOM" id="CLU_009600_0_3_9"/>
<dbReference type="GO" id="GO:0030956">
    <property type="term" value="C:glutamyl-tRNA(Gln) amidotransferase complex"/>
    <property type="evidence" value="ECO:0007669"/>
    <property type="project" value="InterPro"/>
</dbReference>
<dbReference type="GO" id="GO:0005524">
    <property type="term" value="F:ATP binding"/>
    <property type="evidence" value="ECO:0007669"/>
    <property type="project" value="UniProtKB-KW"/>
</dbReference>
<dbReference type="GO" id="GO:0050567">
    <property type="term" value="F:glutaminyl-tRNA synthase (glutamine-hydrolyzing) activity"/>
    <property type="evidence" value="ECO:0007669"/>
    <property type="project" value="UniProtKB-UniRule"/>
</dbReference>
<dbReference type="GO" id="GO:0006412">
    <property type="term" value="P:translation"/>
    <property type="evidence" value="ECO:0007669"/>
    <property type="project" value="UniProtKB-UniRule"/>
</dbReference>
<dbReference type="Gene3D" id="3.90.1300.10">
    <property type="entry name" value="Amidase signature (AS) domain"/>
    <property type="match status" value="1"/>
</dbReference>
<dbReference type="HAMAP" id="MF_00120">
    <property type="entry name" value="GatA"/>
    <property type="match status" value="1"/>
</dbReference>
<dbReference type="InterPro" id="IPR000120">
    <property type="entry name" value="Amidase"/>
</dbReference>
<dbReference type="InterPro" id="IPR020556">
    <property type="entry name" value="Amidase_CS"/>
</dbReference>
<dbReference type="InterPro" id="IPR023631">
    <property type="entry name" value="Amidase_dom"/>
</dbReference>
<dbReference type="InterPro" id="IPR036928">
    <property type="entry name" value="AS_sf"/>
</dbReference>
<dbReference type="InterPro" id="IPR004412">
    <property type="entry name" value="GatA"/>
</dbReference>
<dbReference type="NCBIfam" id="TIGR00132">
    <property type="entry name" value="gatA"/>
    <property type="match status" value="1"/>
</dbReference>
<dbReference type="PANTHER" id="PTHR11895:SF151">
    <property type="entry name" value="GLUTAMYL-TRNA(GLN) AMIDOTRANSFERASE SUBUNIT A"/>
    <property type="match status" value="1"/>
</dbReference>
<dbReference type="PANTHER" id="PTHR11895">
    <property type="entry name" value="TRANSAMIDASE"/>
    <property type="match status" value="1"/>
</dbReference>
<dbReference type="Pfam" id="PF01425">
    <property type="entry name" value="Amidase"/>
    <property type="match status" value="1"/>
</dbReference>
<dbReference type="SUPFAM" id="SSF75304">
    <property type="entry name" value="Amidase signature (AS) enzymes"/>
    <property type="match status" value="1"/>
</dbReference>
<dbReference type="PROSITE" id="PS00571">
    <property type="entry name" value="AMIDASES"/>
    <property type="match status" value="1"/>
</dbReference>
<name>GATA_BACAA</name>
<gene>
    <name evidence="1" type="primary">gatA</name>
    <name type="ordered locus">BAA_0377</name>
</gene>